<reference key="1">
    <citation type="submission" date="1996-03" db="EMBL/GenBank/DDBJ databases">
        <authorList>
            <person name="Barnstable C.J."/>
            <person name="Wei J.Y."/>
        </authorList>
    </citation>
    <scope>NUCLEOTIDE SEQUENCE</scope>
    <source>
        <strain>Sprague-Dawley</strain>
    </source>
</reference>
<reference key="2">
    <citation type="journal article" date="1997" name="Am. J. Physiol.">
        <title>Cloning and widespread distribution of the rat rod-type cyclic nucleotide-gated cation channel.</title>
        <authorList>
            <person name="Ding C."/>
            <person name="Potter E.D."/>
            <person name="Qiu W."/>
            <person name="Coon S.L."/>
            <person name="Levine M.A."/>
            <person name="Guggino S.E."/>
        </authorList>
    </citation>
    <scope>NUCLEOTIDE SEQUENCE [MRNA]</scope>
</reference>
<reference key="3">
    <citation type="journal article" date="1997" name="J. Neurosci.">
        <title>Functional expression of the heteromeric 'olfactory' cyclic nucleotide-gated channel in the hippocampus: a potential effector of synaptic plasticity in brain neurons.</title>
        <authorList>
            <person name="Bradley J."/>
            <person name="Zhang Y."/>
            <person name="Bakin R."/>
            <person name="Lester H.A."/>
            <person name="Ronnett G.V."/>
            <person name="Zinn K."/>
        </authorList>
    </citation>
    <scope>NUCLEOTIDE SEQUENCE [MRNA] OF 521-683</scope>
    <source>
        <strain>Sprague-Dawley</strain>
    </source>
</reference>
<reference key="4">
    <citation type="journal article" date="2001" name="Science">
        <title>Nomenclature for ion channel subunits.</title>
        <authorList>
            <person name="Bradley J."/>
            <person name="Frings S."/>
            <person name="Yau K.W."/>
            <person name="Reed R."/>
        </authorList>
    </citation>
    <scope>NOMENCLATURE</scope>
</reference>
<organism>
    <name type="scientific">Rattus norvegicus</name>
    <name type="common">Rat</name>
    <dbReference type="NCBI Taxonomy" id="10116"/>
    <lineage>
        <taxon>Eukaryota</taxon>
        <taxon>Metazoa</taxon>
        <taxon>Chordata</taxon>
        <taxon>Craniata</taxon>
        <taxon>Vertebrata</taxon>
        <taxon>Euteleostomi</taxon>
        <taxon>Mammalia</taxon>
        <taxon>Eutheria</taxon>
        <taxon>Euarchontoglires</taxon>
        <taxon>Glires</taxon>
        <taxon>Rodentia</taxon>
        <taxon>Myomorpha</taxon>
        <taxon>Muroidea</taxon>
        <taxon>Muridae</taxon>
        <taxon>Murinae</taxon>
        <taxon>Rattus</taxon>
    </lineage>
</organism>
<gene>
    <name evidence="5 7" type="primary">Cnga1</name>
    <name type="synonym">Cncg</name>
    <name type="synonym">Cncg1</name>
</gene>
<name>CNGA1_RAT</name>
<accession>Q62927</accession>
<accession>O08659</accession>
<feature type="chain" id="PRO_0000219310" description="Cyclic nucleotide-gated channel alpha-1">
    <location>
        <begin position="1"/>
        <end position="683"/>
    </location>
</feature>
<feature type="topological domain" description="Cytoplasmic" evidence="6">
    <location>
        <begin position="1"/>
        <end position="160"/>
    </location>
</feature>
<feature type="transmembrane region" description="Helical; Name=S1" evidence="1">
    <location>
        <begin position="161"/>
        <end position="182"/>
    </location>
</feature>
<feature type="topological domain" description="Extracellular" evidence="6">
    <location>
        <begin position="183"/>
        <end position="192"/>
    </location>
</feature>
<feature type="transmembrane region" description="Helical; Name=S2" evidence="1">
    <location>
        <begin position="193"/>
        <end position="213"/>
    </location>
</feature>
<feature type="topological domain" description="Cytoplasmic" evidence="6">
    <location>
        <begin position="214"/>
        <end position="238"/>
    </location>
</feature>
<feature type="transmembrane region" description="Helical; Name=S3" evidence="1">
    <location>
        <begin position="239"/>
        <end position="257"/>
    </location>
</feature>
<feature type="topological domain" description="Extracellular" evidence="6">
    <location>
        <begin position="258"/>
        <end position="262"/>
    </location>
</feature>
<feature type="transmembrane region" description="Helical; Name=S4" evidence="1">
    <location>
        <begin position="263"/>
        <end position="281"/>
    </location>
</feature>
<feature type="topological domain" description="Cytoplasmic" evidence="6">
    <location>
        <begin position="282"/>
        <end position="288"/>
    </location>
</feature>
<feature type="transmembrane region" description="Helical; Name=S5" evidence="1">
    <location>
        <begin position="289"/>
        <end position="312"/>
    </location>
</feature>
<feature type="topological domain" description="Extracellular" evidence="6">
    <location>
        <begin position="313"/>
        <end position="335"/>
    </location>
</feature>
<feature type="transmembrane region" description="Helical; Name=P-helix" evidence="1">
    <location>
        <begin position="336"/>
        <end position="370"/>
    </location>
</feature>
<feature type="transmembrane region" description="Helical; Name=S6" evidence="1">
    <location>
        <begin position="371"/>
        <end position="395"/>
    </location>
</feature>
<feature type="topological domain" description="Cytoplasmic" evidence="6">
    <location>
        <begin position="396"/>
        <end position="683"/>
    </location>
</feature>
<feature type="region of interest" description="Disordered" evidence="4">
    <location>
        <begin position="34"/>
        <end position="144"/>
    </location>
</feature>
<feature type="region of interest" description="Ion conduction pathway" evidence="1">
    <location>
        <begin position="286"/>
        <end position="394"/>
    </location>
</feature>
<feature type="region of interest" description="Selectivity filter" evidence="1">
    <location>
        <begin position="353"/>
        <end position="356"/>
    </location>
</feature>
<feature type="region of interest" description="C-linker" evidence="1">
    <location>
        <begin position="396"/>
        <end position="472"/>
    </location>
</feature>
<feature type="region of interest" description="Cyclic nucleotide-binding domain" evidence="1">
    <location>
        <begin position="476"/>
        <end position="596"/>
    </location>
</feature>
<feature type="coiled-coil region" evidence="1">
    <location>
        <begin position="614"/>
        <end position="668"/>
    </location>
</feature>
<feature type="compositionally biased region" description="Basic and acidic residues" evidence="4">
    <location>
        <begin position="105"/>
        <end position="144"/>
    </location>
</feature>
<feature type="binding site" evidence="1">
    <location>
        <position position="536"/>
    </location>
    <ligand>
        <name>3',5'-cyclic GMP</name>
        <dbReference type="ChEBI" id="CHEBI:57746"/>
    </ligand>
</feature>
<feature type="binding site" evidence="1">
    <location>
        <position position="539"/>
    </location>
    <ligand>
        <name>3',5'-cyclic GMP</name>
        <dbReference type="ChEBI" id="CHEBI:57746"/>
    </ligand>
</feature>
<feature type="binding site" evidence="1">
    <location>
        <position position="552"/>
    </location>
    <ligand>
        <name>3',5'-cyclic AMP</name>
        <dbReference type="ChEBI" id="CHEBI:58165"/>
    </ligand>
</feature>
<feature type="binding site" evidence="1">
    <location>
        <position position="552"/>
    </location>
    <ligand>
        <name>3',5'-cyclic GMP</name>
        <dbReference type="ChEBI" id="CHEBI:57746"/>
    </ligand>
</feature>
<feature type="binding site" evidence="1">
    <location>
        <position position="553"/>
    </location>
    <ligand>
        <name>3',5'-cyclic AMP</name>
        <dbReference type="ChEBI" id="CHEBI:58165"/>
    </ligand>
</feature>
<feature type="binding site" evidence="1">
    <location>
        <position position="553"/>
    </location>
    <ligand>
        <name>3',5'-cyclic GMP</name>
        <dbReference type="ChEBI" id="CHEBI:57746"/>
    </ligand>
</feature>
<feature type="site" description="Central gate" evidence="1">
    <location>
        <position position="380"/>
    </location>
</feature>
<feature type="site" description="Central gate" evidence="1">
    <location>
        <position position="384"/>
    </location>
</feature>
<feature type="glycosylation site" description="N-linked (GlcNAc...) asparagine" evidence="2">
    <location>
        <position position="320"/>
    </location>
</feature>
<feature type="sequence conflict" description="In Ref. 2; AAC53139." evidence="6" ref="2">
    <original>TN</original>
    <variation>KV</variation>
    <location>
        <begin position="3"/>
        <end position="4"/>
    </location>
</feature>
<feature type="sequence conflict" description="In Ref. 2; AAC53139." evidence="6" ref="2">
    <original>E</original>
    <variation>G</variation>
    <location>
        <position position="141"/>
    </location>
</feature>
<feature type="sequence conflict" description="In Ref. 2; AAC53139." evidence="6" ref="2">
    <original>E</original>
    <variation>K</variation>
    <location>
        <position position="224"/>
    </location>
</feature>
<dbReference type="EMBL" id="U48803">
    <property type="protein sequence ID" value="AAA92110.1"/>
    <property type="molecule type" value="Genomic_DNA"/>
</dbReference>
<dbReference type="EMBL" id="U93851">
    <property type="protein sequence ID" value="AAC53139.1"/>
    <property type="molecule type" value="mRNA"/>
</dbReference>
<dbReference type="EMBL" id="U76220">
    <property type="protein sequence ID" value="AAC17594.1"/>
    <property type="molecule type" value="mRNA"/>
</dbReference>
<dbReference type="RefSeq" id="NP_445949.1">
    <property type="nucleotide sequence ID" value="NM_053497.1"/>
</dbReference>
<dbReference type="SMR" id="Q62927"/>
<dbReference type="FunCoup" id="Q62927">
    <property type="interactions" value="23"/>
</dbReference>
<dbReference type="IntAct" id="Q62927">
    <property type="interactions" value="1"/>
</dbReference>
<dbReference type="MINT" id="Q62927"/>
<dbReference type="STRING" id="10116.ENSRNOP00000006469"/>
<dbReference type="GuidetoPHARMACOLOGY" id="394"/>
<dbReference type="GlyCosmos" id="Q62927">
    <property type="glycosylation" value="1 site, No reported glycans"/>
</dbReference>
<dbReference type="GlyGen" id="Q62927">
    <property type="glycosylation" value="1 site"/>
</dbReference>
<dbReference type="PhosphoSitePlus" id="Q62927"/>
<dbReference type="PaxDb" id="10116-ENSRNOP00000006469"/>
<dbReference type="ABCD" id="Q62927">
    <property type="antibodies" value="1 sequenced antibody"/>
</dbReference>
<dbReference type="GeneID" id="85259"/>
<dbReference type="KEGG" id="rno:85259"/>
<dbReference type="UCSC" id="RGD:621815">
    <property type="organism name" value="rat"/>
</dbReference>
<dbReference type="AGR" id="RGD:621815"/>
<dbReference type="CTD" id="1259"/>
<dbReference type="RGD" id="621815">
    <property type="gene designation" value="Cnga1"/>
</dbReference>
<dbReference type="eggNOG" id="KOG0500">
    <property type="taxonomic scope" value="Eukaryota"/>
</dbReference>
<dbReference type="InParanoid" id="Q62927"/>
<dbReference type="PhylomeDB" id="Q62927"/>
<dbReference type="Reactome" id="R-RNO-2485179">
    <property type="pathway name" value="Activation of the phototransduction cascade"/>
</dbReference>
<dbReference type="Reactome" id="R-RNO-2514859">
    <property type="pathway name" value="Inactivation, recovery and regulation of the phototransduction cascade"/>
</dbReference>
<dbReference type="PRO" id="PR:Q62927"/>
<dbReference type="Proteomes" id="UP000002494">
    <property type="component" value="Unplaced"/>
</dbReference>
<dbReference type="GO" id="GO:0017071">
    <property type="term" value="C:intracellular cyclic nucleotide activated cation channel complex"/>
    <property type="evidence" value="ECO:0000314"/>
    <property type="project" value="RGD"/>
</dbReference>
<dbReference type="GO" id="GO:0016020">
    <property type="term" value="C:membrane"/>
    <property type="evidence" value="ECO:0000266"/>
    <property type="project" value="RGD"/>
</dbReference>
<dbReference type="GO" id="GO:0001750">
    <property type="term" value="C:photoreceptor outer segment"/>
    <property type="evidence" value="ECO:0000266"/>
    <property type="project" value="RGD"/>
</dbReference>
<dbReference type="GO" id="GO:0042622">
    <property type="term" value="C:photoreceptor outer segment membrane"/>
    <property type="evidence" value="ECO:0000266"/>
    <property type="project" value="RGD"/>
</dbReference>
<dbReference type="GO" id="GO:0005886">
    <property type="term" value="C:plasma membrane"/>
    <property type="evidence" value="ECO:0000318"/>
    <property type="project" value="GO_Central"/>
</dbReference>
<dbReference type="GO" id="GO:0120200">
    <property type="term" value="C:rod photoreceptor outer segment"/>
    <property type="evidence" value="ECO:0000250"/>
    <property type="project" value="UniProtKB"/>
</dbReference>
<dbReference type="GO" id="GO:0043195">
    <property type="term" value="C:terminal bouton"/>
    <property type="evidence" value="ECO:0000314"/>
    <property type="project" value="RGD"/>
</dbReference>
<dbReference type="GO" id="GO:0005262">
    <property type="term" value="F:calcium channel activity"/>
    <property type="evidence" value="ECO:0007669"/>
    <property type="project" value="UniProtKB-KW"/>
</dbReference>
<dbReference type="GO" id="GO:0030552">
    <property type="term" value="F:cAMP binding"/>
    <property type="evidence" value="ECO:0000250"/>
    <property type="project" value="UniProtKB"/>
</dbReference>
<dbReference type="GO" id="GO:0030553">
    <property type="term" value="F:cGMP binding"/>
    <property type="evidence" value="ECO:0000314"/>
    <property type="project" value="RGD"/>
</dbReference>
<dbReference type="GO" id="GO:0005222">
    <property type="term" value="F:intracellularly cAMP-activated cation channel activity"/>
    <property type="evidence" value="ECO:0000250"/>
    <property type="project" value="UniProtKB"/>
</dbReference>
<dbReference type="GO" id="GO:0005223">
    <property type="term" value="F:intracellularly cGMP-activated cation channel activity"/>
    <property type="evidence" value="ECO:0000314"/>
    <property type="project" value="RGD"/>
</dbReference>
<dbReference type="GO" id="GO:0005221">
    <property type="term" value="F:intracellularly cyclic nucleotide-activated monoatomic cation channel activity"/>
    <property type="evidence" value="ECO:0000304"/>
    <property type="project" value="RGD"/>
</dbReference>
<dbReference type="GO" id="GO:0044877">
    <property type="term" value="F:protein-containing complex binding"/>
    <property type="evidence" value="ECO:0000318"/>
    <property type="project" value="GO_Central"/>
</dbReference>
<dbReference type="GO" id="GO:0005272">
    <property type="term" value="F:sodium channel activity"/>
    <property type="evidence" value="ECO:0007669"/>
    <property type="project" value="UniProtKB-KW"/>
</dbReference>
<dbReference type="GO" id="GO:0006816">
    <property type="term" value="P:calcium ion transport"/>
    <property type="evidence" value="ECO:0000250"/>
    <property type="project" value="UniProtKB"/>
</dbReference>
<dbReference type="GO" id="GO:0051899">
    <property type="term" value="P:membrane depolarization"/>
    <property type="evidence" value="ECO:0000314"/>
    <property type="project" value="RGD"/>
</dbReference>
<dbReference type="GO" id="GO:0098655">
    <property type="term" value="P:monoatomic cation transmembrane transport"/>
    <property type="evidence" value="ECO:0000318"/>
    <property type="project" value="GO_Central"/>
</dbReference>
<dbReference type="GO" id="GO:0051480">
    <property type="term" value="P:regulation of cytosolic calcium ion concentration"/>
    <property type="evidence" value="ECO:0000314"/>
    <property type="project" value="RGD"/>
</dbReference>
<dbReference type="GO" id="GO:0006814">
    <property type="term" value="P:sodium ion transport"/>
    <property type="evidence" value="ECO:0000250"/>
    <property type="project" value="UniProtKB"/>
</dbReference>
<dbReference type="GO" id="GO:0007283">
    <property type="term" value="P:spermatogenesis"/>
    <property type="evidence" value="ECO:0000270"/>
    <property type="project" value="RGD"/>
</dbReference>
<dbReference type="GO" id="GO:0007601">
    <property type="term" value="P:visual perception"/>
    <property type="evidence" value="ECO:0007669"/>
    <property type="project" value="UniProtKB-KW"/>
</dbReference>
<dbReference type="CDD" id="cd00038">
    <property type="entry name" value="CAP_ED"/>
    <property type="match status" value="1"/>
</dbReference>
<dbReference type="FunFam" id="1.20.5.170:FF:000069">
    <property type="entry name" value="cGMP-gated cation channel alpha-1"/>
    <property type="match status" value="1"/>
</dbReference>
<dbReference type="FunFam" id="2.60.120.10:FF:000002">
    <property type="entry name" value="Cyclic nucleotide gated channel alpha 1a"/>
    <property type="match status" value="1"/>
</dbReference>
<dbReference type="FunFam" id="1.10.287.630:FF:000001">
    <property type="entry name" value="Cyclic nucleotide-gated channel alpha 3"/>
    <property type="match status" value="1"/>
</dbReference>
<dbReference type="FunFam" id="1.10.287.70:FF:000030">
    <property type="entry name" value="Cyclic nucleotide-gated channel alpha 3"/>
    <property type="match status" value="1"/>
</dbReference>
<dbReference type="Gene3D" id="1.10.287.70">
    <property type="match status" value="1"/>
</dbReference>
<dbReference type="Gene3D" id="1.20.5.170">
    <property type="match status" value="1"/>
</dbReference>
<dbReference type="Gene3D" id="1.10.287.630">
    <property type="entry name" value="Helix hairpin bin"/>
    <property type="match status" value="1"/>
</dbReference>
<dbReference type="Gene3D" id="2.60.120.10">
    <property type="entry name" value="Jelly Rolls"/>
    <property type="match status" value="1"/>
</dbReference>
<dbReference type="InterPro" id="IPR032406">
    <property type="entry name" value="CLZ_dom"/>
</dbReference>
<dbReference type="InterPro" id="IPR050866">
    <property type="entry name" value="CNG_cation_channel"/>
</dbReference>
<dbReference type="InterPro" id="IPR018488">
    <property type="entry name" value="cNMP-bd_CS"/>
</dbReference>
<dbReference type="InterPro" id="IPR000595">
    <property type="entry name" value="cNMP-bd_dom"/>
</dbReference>
<dbReference type="InterPro" id="IPR018490">
    <property type="entry name" value="cNMP-bd_dom_sf"/>
</dbReference>
<dbReference type="InterPro" id="IPR005821">
    <property type="entry name" value="Ion_trans_dom"/>
</dbReference>
<dbReference type="InterPro" id="IPR014710">
    <property type="entry name" value="RmlC-like_jellyroll"/>
</dbReference>
<dbReference type="PANTHER" id="PTHR45638">
    <property type="entry name" value="CYCLIC NUCLEOTIDE-GATED CATION CHANNEL SUBUNIT A"/>
    <property type="match status" value="1"/>
</dbReference>
<dbReference type="PANTHER" id="PTHR45638:SF9">
    <property type="entry name" value="CYCLIC NUCLEOTIDE-GATED CHANNEL ROD PHOTORECEPTOR SUBUNIT ALPHA"/>
    <property type="match status" value="1"/>
</dbReference>
<dbReference type="Pfam" id="PF16526">
    <property type="entry name" value="CLZ"/>
    <property type="match status" value="1"/>
</dbReference>
<dbReference type="Pfam" id="PF00027">
    <property type="entry name" value="cNMP_binding"/>
    <property type="match status" value="1"/>
</dbReference>
<dbReference type="Pfam" id="PF00520">
    <property type="entry name" value="Ion_trans"/>
    <property type="match status" value="1"/>
</dbReference>
<dbReference type="SMART" id="SM00100">
    <property type="entry name" value="cNMP"/>
    <property type="match status" value="1"/>
</dbReference>
<dbReference type="SUPFAM" id="SSF51206">
    <property type="entry name" value="cAMP-binding domain-like"/>
    <property type="match status" value="1"/>
</dbReference>
<dbReference type="SUPFAM" id="SSF81324">
    <property type="entry name" value="Voltage-gated potassium channels"/>
    <property type="match status" value="1"/>
</dbReference>
<dbReference type="PROSITE" id="PS00888">
    <property type="entry name" value="CNMP_BINDING_1"/>
    <property type="match status" value="1"/>
</dbReference>
<dbReference type="PROSITE" id="PS00889">
    <property type="entry name" value="CNMP_BINDING_2"/>
    <property type="match status" value="1"/>
</dbReference>
<dbReference type="PROSITE" id="PS50042">
    <property type="entry name" value="CNMP_BINDING_3"/>
    <property type="match status" value="1"/>
</dbReference>
<evidence type="ECO:0000250" key="1">
    <source>
        <dbReference type="UniProtKB" id="P29973"/>
    </source>
</evidence>
<evidence type="ECO:0000250" key="2">
    <source>
        <dbReference type="UniProtKB" id="Q00194"/>
    </source>
</evidence>
<evidence type="ECO:0000255" key="3"/>
<evidence type="ECO:0000256" key="4">
    <source>
        <dbReference type="SAM" id="MobiDB-lite"/>
    </source>
</evidence>
<evidence type="ECO:0000303" key="5">
    <source>
    </source>
</evidence>
<evidence type="ECO:0000305" key="6"/>
<evidence type="ECO:0000312" key="7">
    <source>
        <dbReference type="RGD" id="621815"/>
    </source>
</evidence>
<keyword id="KW-0106">Calcium</keyword>
<keyword id="KW-0107">Calcium channel</keyword>
<keyword id="KW-0109">Calcium transport</keyword>
<keyword id="KW-0114">cAMP</keyword>
<keyword id="KW-0116">cAMP-binding</keyword>
<keyword id="KW-1003">Cell membrane</keyword>
<keyword id="KW-0140">cGMP</keyword>
<keyword id="KW-0142">cGMP-binding</keyword>
<keyword id="KW-0175">Coiled coil</keyword>
<keyword id="KW-0325">Glycoprotein</keyword>
<keyword id="KW-0407">Ion channel</keyword>
<keyword id="KW-0406">Ion transport</keyword>
<keyword id="KW-1071">Ligand-gated ion channel</keyword>
<keyword id="KW-0472">Membrane</keyword>
<keyword id="KW-0547">Nucleotide-binding</keyword>
<keyword id="KW-1185">Reference proteome</keyword>
<keyword id="KW-0716">Sensory transduction</keyword>
<keyword id="KW-0915">Sodium</keyword>
<keyword id="KW-0894">Sodium channel</keyword>
<keyword id="KW-0739">Sodium transport</keyword>
<keyword id="KW-0812">Transmembrane</keyword>
<keyword id="KW-1133">Transmembrane helix</keyword>
<keyword id="KW-0813">Transport</keyword>
<keyword id="KW-0844">Vision</keyword>
<protein>
    <recommendedName>
        <fullName>Cyclic nucleotide-gated channel alpha-1</fullName>
        <shortName>CNG channel alpha-1</shortName>
        <shortName>CNG-1</shortName>
        <shortName evidence="5">CNG1</shortName>
    </recommendedName>
    <alternativeName>
        <fullName>Cyclic nucleotide-gated cation channel 1</fullName>
    </alternativeName>
    <alternativeName>
        <fullName>Cyclic nucleotide-gated channel, photoreceptor</fullName>
    </alternativeName>
    <alternativeName>
        <fullName evidence="1">Rod photoreceptor cGMP-gated cation channel subunit alpha</fullName>
    </alternativeName>
    <alternativeName>
        <fullName>cGMP-gated cation channel alpha-1</fullName>
    </alternativeName>
</protein>
<sequence length="683" mass="79228">MKTNIINTWHSFVNIPNVVVPAIEKEIRRMENGACSSFSDNDNGSLSEESENEDSLFRSNSYRRRGPSQREHYLPGTMALFNVNNSSNKDQDPKEKKKKKKEKKSKADDKKESKKDPEKKKKKEKEKEKKKEEKPKEKKEEEKKEVVVIDPSGNMYYNWLFCITLPVMYNWTMIIARACFDELQSDYLEYWLIFDYVSDVVYLADMFVRTRTGYLEQGLLVKDELKLIEKYKANLQFKLDVLSVIPTDLLYFKFGWNYPEIRLNRLLRISRMFEFFQRTETRTNYPNIFRISNLVMYIVIIIHWNACVYYSISKAIGFGNDTWVYPDVNDPEFGRLARKYVYSLYWSTLTLTTIGETPPPVLDSEYVFVVVDFLIGVLIFATIVGNIGSMISNMNAARAEFQSRVDAIKQYMNFRNVSKDMEKRVIKWFDYLWTNKKTVDEREVLRYLPDKLRAEIAINVHLDTLKKVRIFADCEAGLLVELVLKLQPQVYSPGDYICKKGDIGREMYIIKEGKLAVVADDGITQFVVLSDGSYFGEISILNIKGSKAGNRRTANIKSIGYSDLFCLSKDDLMEALTEYPDAKTMLEEKGRQILMKDGLLDINIANLGSDPKDLEEKVTRMEGSVDLLQTRFARILAEYESMQQKLKQRLTKVEKFLKPLIETEFSALEEPGGESEPTESLQG</sequence>
<proteinExistence type="evidence at transcript level"/>
<comment type="function">
    <text evidence="1 2">Pore-forming subunit of the rod cyclic nucleotide-gated channel. Mediates rod photoresponses at dim light converting transient changes in intracellular cGMP levels into electrical signals. In the dark, cGMP levels are high and keep the channel open enabling a steady inward current carried by Na(+) and Ca(2+) ions that leads to membrane depolarization and neurotransmitter release from synaptic terminals. Upon photon absorption cGMP levels decline leading to channel closure and membrane hyperpolarization that ultimately slows neurotransmitter release and signals the presence of light, the end point of the phototransduction cascade. Conducts cGMP- and cAMP-gated ion currents, with permeability for monovalent and divalent cations. The selectivity for Ca(2+) over Na(+) increases with cGMP concentrations, whereas the selectivity among monovalent ions is independent of the cGMP levels.</text>
</comment>
<comment type="catalytic activity">
    <reaction evidence="2">
        <text>Ca(2+)(in) = Ca(2+)(out)</text>
        <dbReference type="Rhea" id="RHEA:29671"/>
        <dbReference type="ChEBI" id="CHEBI:29108"/>
    </reaction>
</comment>
<comment type="catalytic activity">
    <reaction evidence="2">
        <text>Na(+)(in) = Na(+)(out)</text>
        <dbReference type="Rhea" id="RHEA:34963"/>
        <dbReference type="ChEBI" id="CHEBI:29101"/>
    </reaction>
</comment>
<comment type="catalytic activity">
    <reaction evidence="2">
        <text>K(+)(in) = K(+)(out)</text>
        <dbReference type="Rhea" id="RHEA:29463"/>
        <dbReference type="ChEBI" id="CHEBI:29103"/>
    </reaction>
</comment>
<comment type="catalytic activity">
    <reaction evidence="2">
        <text>NH4(+)(in) = NH4(+)(out)</text>
        <dbReference type="Rhea" id="RHEA:28747"/>
        <dbReference type="ChEBI" id="CHEBI:28938"/>
    </reaction>
</comment>
<comment type="catalytic activity">
    <reaction evidence="2">
        <text>Rb(+)(in) = Rb(+)(out)</text>
        <dbReference type="Rhea" id="RHEA:78547"/>
        <dbReference type="ChEBI" id="CHEBI:49847"/>
    </reaction>
</comment>
<comment type="catalytic activity">
    <reaction evidence="2">
        <text>Li(+)(in) = Li(+)(out)</text>
        <dbReference type="Rhea" id="RHEA:78551"/>
        <dbReference type="ChEBI" id="CHEBI:49713"/>
    </reaction>
</comment>
<comment type="catalytic activity">
    <reaction evidence="2">
        <text>Cs(+)(in) = Cs(+)(out)</text>
        <dbReference type="Rhea" id="RHEA:78555"/>
        <dbReference type="ChEBI" id="CHEBI:49547"/>
    </reaction>
</comment>
<comment type="subunit">
    <text evidence="1 2">Forms heterotetrameric channels composed of CNGA1 and CNGB1 subunits with 3:1 stoichiometry (By similarity). May also form cyclic nucleotide-activated homotetrameric channels, that are efficiently activated by saturating cGMP, but poorly activated by saturating cAMP compared to the heterotetramer with CNGB1. The channel binds Ca(2+)-bound CALM1 via CaM1 and CaM2 regions of the CNGB1 subunit; this interaction modulates the affinity of the channel for cNMPs in response to intracellular Ca(2+) levels (By similarity).</text>
</comment>
<comment type="subcellular location">
    <subcellularLocation>
        <location evidence="1">Cell membrane</location>
        <topology evidence="3">Multi-pass membrane protein</topology>
    </subcellularLocation>
</comment>
<comment type="tissue specificity">
    <text>Rod cells in the retina.</text>
</comment>
<comment type="domain">
    <text evidence="1">The C-terminal coiled-coil domain mediates homotrimerization of CNGA1 subunit.</text>
</comment>
<comment type="domain">
    <text evidence="1">The cyclic nucleotide-binding domain (CNBD) comprises three helices and a beta-roll of eight beta-strands from CNGA1 and CNGB1 subunits. Upon cNMP binding transmits the conformational changes to the C-linker domain of the S6 helix to open the ion conduction pathway.</text>
</comment>
<comment type="domain">
    <text evidence="1">The ion conduction pathway consists of S5, S6 and pore helices from CNGA1 and CNGB1 subunits. It contains a central hydrophobic gate that opens upon cNMP binding.</text>
</comment>
<comment type="similarity">
    <text evidence="6">Belongs to the cyclic nucleotide-gated cation channel (TC 1.A.1.5) family. CNGA1 subfamily.</text>
</comment>